<evidence type="ECO:0000255" key="1">
    <source>
        <dbReference type="HAMAP-Rule" id="MF_00275"/>
    </source>
</evidence>
<proteinExistence type="inferred from homology"/>
<dbReference type="EMBL" id="AE014075">
    <property type="protein sequence ID" value="AAN79256.1"/>
    <property type="molecule type" value="Genomic_DNA"/>
</dbReference>
<dbReference type="RefSeq" id="WP_000741152.1">
    <property type="nucleotide sequence ID" value="NZ_CP051263.1"/>
</dbReference>
<dbReference type="SMR" id="Q8FJV3"/>
<dbReference type="STRING" id="199310.c0783"/>
<dbReference type="KEGG" id="ecc:c0783"/>
<dbReference type="eggNOG" id="COG2060">
    <property type="taxonomic scope" value="Bacteria"/>
</dbReference>
<dbReference type="HOGENOM" id="CLU_018614_3_0_6"/>
<dbReference type="BioCyc" id="ECOL199310:C0783-MONOMER"/>
<dbReference type="Proteomes" id="UP000001410">
    <property type="component" value="Chromosome"/>
</dbReference>
<dbReference type="GO" id="GO:0005886">
    <property type="term" value="C:plasma membrane"/>
    <property type="evidence" value="ECO:0007669"/>
    <property type="project" value="UniProtKB-SubCell"/>
</dbReference>
<dbReference type="GO" id="GO:0008556">
    <property type="term" value="F:P-type potassium transmembrane transporter activity"/>
    <property type="evidence" value="ECO:0007669"/>
    <property type="project" value="InterPro"/>
</dbReference>
<dbReference type="GO" id="GO:0030955">
    <property type="term" value="F:potassium ion binding"/>
    <property type="evidence" value="ECO:0007669"/>
    <property type="project" value="UniProtKB-UniRule"/>
</dbReference>
<dbReference type="HAMAP" id="MF_00275">
    <property type="entry name" value="KdpA"/>
    <property type="match status" value="1"/>
</dbReference>
<dbReference type="InterPro" id="IPR004623">
    <property type="entry name" value="KdpA"/>
</dbReference>
<dbReference type="NCBIfam" id="TIGR00680">
    <property type="entry name" value="kdpA"/>
    <property type="match status" value="1"/>
</dbReference>
<dbReference type="PANTHER" id="PTHR30607">
    <property type="entry name" value="POTASSIUM-TRANSPORTING ATPASE A CHAIN"/>
    <property type="match status" value="1"/>
</dbReference>
<dbReference type="PANTHER" id="PTHR30607:SF2">
    <property type="entry name" value="POTASSIUM-TRANSPORTING ATPASE POTASSIUM-BINDING SUBUNIT"/>
    <property type="match status" value="1"/>
</dbReference>
<dbReference type="Pfam" id="PF03814">
    <property type="entry name" value="KdpA"/>
    <property type="match status" value="1"/>
</dbReference>
<dbReference type="PIRSF" id="PIRSF001294">
    <property type="entry name" value="K_ATPaseA"/>
    <property type="match status" value="1"/>
</dbReference>
<comment type="function">
    <text evidence="1">Part of the high-affinity ATP-driven potassium transport (or Kdp) system, which catalyzes the hydrolysis of ATP coupled with the electrogenic transport of potassium into the cytoplasm. This subunit binds the periplasmic potassium ions and delivers the ions to the membrane domain of KdpB through an intramembrane tunnel.</text>
</comment>
<comment type="subunit">
    <text evidence="1">The system is composed of three essential subunits: KdpA, KdpB and KdpC.</text>
</comment>
<comment type="subcellular location">
    <subcellularLocation>
        <location evidence="1">Cell inner membrane</location>
        <topology evidence="1">Multi-pass membrane protein</topology>
    </subcellularLocation>
</comment>
<comment type="similarity">
    <text evidence="1">Belongs to the KdpA family.</text>
</comment>
<feature type="chain" id="PRO_0000166495" description="Potassium-transporting ATPase potassium-binding subunit">
    <location>
        <begin position="1"/>
        <end position="557"/>
    </location>
</feature>
<feature type="transmembrane region" description="Helical" evidence="1">
    <location>
        <begin position="5"/>
        <end position="25"/>
    </location>
</feature>
<feature type="transmembrane region" description="Helical" evidence="1">
    <location>
        <begin position="63"/>
        <end position="83"/>
    </location>
</feature>
<feature type="transmembrane region" description="Helical" evidence="1">
    <location>
        <begin position="132"/>
        <end position="152"/>
    </location>
</feature>
<feature type="transmembrane region" description="Helical" evidence="1">
    <location>
        <begin position="170"/>
        <end position="190"/>
    </location>
</feature>
<feature type="transmembrane region" description="Helical" evidence="1">
    <location>
        <begin position="253"/>
        <end position="273"/>
    </location>
</feature>
<feature type="transmembrane region" description="Helical" evidence="1">
    <location>
        <begin position="283"/>
        <end position="303"/>
    </location>
</feature>
<feature type="transmembrane region" description="Helical" evidence="1">
    <location>
        <begin position="329"/>
        <end position="349"/>
    </location>
</feature>
<feature type="transmembrane region" description="Helical" evidence="1">
    <location>
        <begin position="356"/>
        <end position="376"/>
    </location>
</feature>
<feature type="transmembrane region" description="Helical" evidence="1">
    <location>
        <begin position="379"/>
        <end position="399"/>
    </location>
</feature>
<feature type="transmembrane region" description="Helical" evidence="1">
    <location>
        <begin position="416"/>
        <end position="436"/>
    </location>
</feature>
<feature type="transmembrane region" description="Helical" evidence="1">
    <location>
        <begin position="484"/>
        <end position="504"/>
    </location>
</feature>
<feature type="transmembrane region" description="Helical" evidence="1">
    <location>
        <begin position="526"/>
        <end position="546"/>
    </location>
</feature>
<accession>Q8FJV3</accession>
<gene>
    <name evidence="1" type="primary">kdpA</name>
    <name type="ordered locus">c0783</name>
</gene>
<keyword id="KW-0997">Cell inner membrane</keyword>
<keyword id="KW-1003">Cell membrane</keyword>
<keyword id="KW-0406">Ion transport</keyword>
<keyword id="KW-0472">Membrane</keyword>
<keyword id="KW-0630">Potassium</keyword>
<keyword id="KW-0633">Potassium transport</keyword>
<keyword id="KW-1185">Reference proteome</keyword>
<keyword id="KW-0812">Transmembrane</keyword>
<keyword id="KW-1133">Transmembrane helix</keyword>
<keyword id="KW-0813">Transport</keyword>
<name>KDPA_ECOL6</name>
<protein>
    <recommendedName>
        <fullName evidence="1">Potassium-transporting ATPase potassium-binding subunit</fullName>
    </recommendedName>
    <alternativeName>
        <fullName evidence="1">ATP phosphohydrolase [potassium-transporting] A chain</fullName>
    </alternativeName>
    <alternativeName>
        <fullName evidence="1">Potassium-binding and translocating subunit A</fullName>
    </alternativeName>
    <alternativeName>
        <fullName evidence="1">Potassium-translocating ATPase A chain</fullName>
    </alternativeName>
</protein>
<sequence>MAAQGFLLIATFLLVLMVLARPLGSGLARLINDIPLPGTTGVERVLFSALGVSDREMNWKQYLSAILGLNILGLAVLFFMLLGQHYLPLNPQQLPGLSWDLALNTAVSFVTNTNWQSYSGETTLSYFSQMAGLTVQNFLSAASGIAVIFALIRAFTRQSMSTLGNAWVDLLRITLWVLAPVALLIALFFIQQGALQNFLPYQAVTTIEGSQQLLPMGPVASQEAIKMLGTNGGGFFNANSSHPFENPTALTNFVQMLAIFLIPTALCFAFGEVAGDRRQGRMLLWAMSVIFVICTGVVMWAEVQGNPHLLALGADSSINMEGKESRFGVLVSSLFAVVTTAASCGAVIAMHDSFTALGGMVPMWLMQIGEVVFGGVGSGLYGMMLFVLLAVFIAGLMIGRTPEYLGKKIDVREMKLTALAILVTPTLVLMGAALAMMTDAGRSAMLNPGPHGFSEVLYAVSSAANNNGSAFAGLSANSPFWNCLLALCMFVGRFGVIIPVMAIAGSLVSKKSQPASSGTLPTHGPLFVGLLIGTVLLVGALTFIPALALGPVAEYLS</sequence>
<organism>
    <name type="scientific">Escherichia coli O6:H1 (strain CFT073 / ATCC 700928 / UPEC)</name>
    <dbReference type="NCBI Taxonomy" id="199310"/>
    <lineage>
        <taxon>Bacteria</taxon>
        <taxon>Pseudomonadati</taxon>
        <taxon>Pseudomonadota</taxon>
        <taxon>Gammaproteobacteria</taxon>
        <taxon>Enterobacterales</taxon>
        <taxon>Enterobacteriaceae</taxon>
        <taxon>Escherichia</taxon>
    </lineage>
</organism>
<reference key="1">
    <citation type="journal article" date="2002" name="Proc. Natl. Acad. Sci. U.S.A.">
        <title>Extensive mosaic structure revealed by the complete genome sequence of uropathogenic Escherichia coli.</title>
        <authorList>
            <person name="Welch R.A."/>
            <person name="Burland V."/>
            <person name="Plunkett G. III"/>
            <person name="Redford P."/>
            <person name="Roesch P."/>
            <person name="Rasko D."/>
            <person name="Buckles E.L."/>
            <person name="Liou S.-R."/>
            <person name="Boutin A."/>
            <person name="Hackett J."/>
            <person name="Stroud D."/>
            <person name="Mayhew G.F."/>
            <person name="Rose D.J."/>
            <person name="Zhou S."/>
            <person name="Schwartz D.C."/>
            <person name="Perna N.T."/>
            <person name="Mobley H.L.T."/>
            <person name="Donnenberg M.S."/>
            <person name="Blattner F.R."/>
        </authorList>
    </citation>
    <scope>NUCLEOTIDE SEQUENCE [LARGE SCALE GENOMIC DNA]</scope>
    <source>
        <strain>CFT073 / ATCC 700928 / UPEC</strain>
    </source>
</reference>